<protein>
    <recommendedName>
        <fullName evidence="1">Energy-coupling factor transporter ATP-binding protein EcfA1</fullName>
        <shortName evidence="1">ECF transporter A component EcfA1</shortName>
        <ecNumber evidence="1">7.-.-.-</ecNumber>
    </recommendedName>
</protein>
<keyword id="KW-0067">ATP-binding</keyword>
<keyword id="KW-1003">Cell membrane</keyword>
<keyword id="KW-0472">Membrane</keyword>
<keyword id="KW-0547">Nucleotide-binding</keyword>
<keyword id="KW-1185">Reference proteome</keyword>
<keyword id="KW-1278">Translocase</keyword>
<keyword id="KW-0813">Transport</keyword>
<gene>
    <name evidence="1" type="primary">ecfA1</name>
    <name type="synonym">cbiO1</name>
    <name type="ordered locus">SMU_2150c</name>
</gene>
<proteinExistence type="inferred from homology"/>
<sequence>MTDKIIELKNVTFRYDENQEKPTLNNISFHVKHGEWLSIIGHNGSGKSTTVRLIDGLLEAESGQILIEGHKLSEDNVWDIRHKISMVFQNPDNQFVGATVEDDIAFGLENKGIPLKEMRERVVEALNLVDMSDFKTREPARLSGGQKQRVAIAGAVAMRPSIIILDEATSMLDPEGRLELIGTIQKIREQYGMTVISITHDLDEVTLSDRVLVMKNGQIESSSSPRELFSRGDELLDLGLDIPFTSTIIKALRQIGFTFDNRYLLEKELEDKLWALISKK</sequence>
<name>ECFA1_STRMU</name>
<evidence type="ECO:0000255" key="1">
    <source>
        <dbReference type="HAMAP-Rule" id="MF_01710"/>
    </source>
</evidence>
<comment type="function">
    <text evidence="1">ATP-binding (A) component of a common energy-coupling factor (ECF) ABC-transporter complex. Unlike classic ABC transporters this ECF transporter provides the energy necessary to transport a number of different substrates.</text>
</comment>
<comment type="subunit">
    <text evidence="1">Forms a stable energy-coupling factor (ECF) transporter complex composed of 2 membrane-embedded substrate-binding proteins (S component), 2 ATP-binding proteins (A component) and 2 transmembrane proteins (T component).</text>
</comment>
<comment type="subcellular location">
    <subcellularLocation>
        <location evidence="1">Cell membrane</location>
        <topology evidence="1">Peripheral membrane protein</topology>
    </subcellularLocation>
</comment>
<comment type="similarity">
    <text evidence="1">Belongs to the ABC transporter superfamily. Energy-coupling factor EcfA family.</text>
</comment>
<feature type="chain" id="PRO_0000092096" description="Energy-coupling factor transporter ATP-binding protein EcfA1">
    <location>
        <begin position="1"/>
        <end position="280"/>
    </location>
</feature>
<feature type="domain" description="ABC transporter" evidence="1">
    <location>
        <begin position="6"/>
        <end position="241"/>
    </location>
</feature>
<feature type="binding site" evidence="1">
    <location>
        <begin position="41"/>
        <end position="48"/>
    </location>
    <ligand>
        <name>ATP</name>
        <dbReference type="ChEBI" id="CHEBI:30616"/>
    </ligand>
</feature>
<dbReference type="EC" id="7.-.-.-" evidence="1"/>
<dbReference type="EMBL" id="AE014133">
    <property type="protein sequence ID" value="AAN59739.1"/>
    <property type="molecule type" value="Genomic_DNA"/>
</dbReference>
<dbReference type="RefSeq" id="NP_722433.1">
    <property type="nucleotide sequence ID" value="NC_004350.2"/>
</dbReference>
<dbReference type="RefSeq" id="WP_002262450.1">
    <property type="nucleotide sequence ID" value="NC_004350.2"/>
</dbReference>
<dbReference type="SMR" id="Q8DRR9"/>
<dbReference type="STRING" id="210007.SMU_2150c"/>
<dbReference type="KEGG" id="smu:SMU_2150c"/>
<dbReference type="PATRIC" id="fig|210007.7.peg.1912"/>
<dbReference type="eggNOG" id="COG1122">
    <property type="taxonomic scope" value="Bacteria"/>
</dbReference>
<dbReference type="HOGENOM" id="CLU_000604_1_22_9"/>
<dbReference type="OrthoDB" id="9784332at2"/>
<dbReference type="PhylomeDB" id="Q8DRR9"/>
<dbReference type="Proteomes" id="UP000002512">
    <property type="component" value="Chromosome"/>
</dbReference>
<dbReference type="GO" id="GO:0043190">
    <property type="term" value="C:ATP-binding cassette (ABC) transporter complex"/>
    <property type="evidence" value="ECO:0007669"/>
    <property type="project" value="TreeGrafter"/>
</dbReference>
<dbReference type="GO" id="GO:0005524">
    <property type="term" value="F:ATP binding"/>
    <property type="evidence" value="ECO:0007669"/>
    <property type="project" value="UniProtKB-KW"/>
</dbReference>
<dbReference type="GO" id="GO:0016887">
    <property type="term" value="F:ATP hydrolysis activity"/>
    <property type="evidence" value="ECO:0007669"/>
    <property type="project" value="InterPro"/>
</dbReference>
<dbReference type="GO" id="GO:0042626">
    <property type="term" value="F:ATPase-coupled transmembrane transporter activity"/>
    <property type="evidence" value="ECO:0007669"/>
    <property type="project" value="TreeGrafter"/>
</dbReference>
<dbReference type="CDD" id="cd03225">
    <property type="entry name" value="ABC_cobalt_CbiO_domain1"/>
    <property type="match status" value="1"/>
</dbReference>
<dbReference type="FunFam" id="3.40.50.300:FF:000224">
    <property type="entry name" value="Energy-coupling factor transporter ATP-binding protein EcfA"/>
    <property type="match status" value="1"/>
</dbReference>
<dbReference type="Gene3D" id="3.40.50.300">
    <property type="entry name" value="P-loop containing nucleotide triphosphate hydrolases"/>
    <property type="match status" value="1"/>
</dbReference>
<dbReference type="InterPro" id="IPR003593">
    <property type="entry name" value="AAA+_ATPase"/>
</dbReference>
<dbReference type="InterPro" id="IPR003439">
    <property type="entry name" value="ABC_transporter-like_ATP-bd"/>
</dbReference>
<dbReference type="InterPro" id="IPR017871">
    <property type="entry name" value="ABC_transporter-like_CS"/>
</dbReference>
<dbReference type="InterPro" id="IPR015856">
    <property type="entry name" value="ABC_transpr_CbiO/EcfA_su"/>
</dbReference>
<dbReference type="InterPro" id="IPR050095">
    <property type="entry name" value="ECF_ABC_transporter_ATP-bd"/>
</dbReference>
<dbReference type="InterPro" id="IPR030947">
    <property type="entry name" value="EcfA_1"/>
</dbReference>
<dbReference type="InterPro" id="IPR027417">
    <property type="entry name" value="P-loop_NTPase"/>
</dbReference>
<dbReference type="NCBIfam" id="TIGR04520">
    <property type="entry name" value="ECF_ATPase_1"/>
    <property type="match status" value="1"/>
</dbReference>
<dbReference type="NCBIfam" id="NF010156">
    <property type="entry name" value="PRK13635.1"/>
    <property type="match status" value="1"/>
</dbReference>
<dbReference type="NCBIfam" id="NF010167">
    <property type="entry name" value="PRK13648.1"/>
    <property type="match status" value="1"/>
</dbReference>
<dbReference type="PANTHER" id="PTHR43553:SF24">
    <property type="entry name" value="ENERGY-COUPLING FACTOR TRANSPORTER ATP-BINDING PROTEIN ECFA1"/>
    <property type="match status" value="1"/>
</dbReference>
<dbReference type="PANTHER" id="PTHR43553">
    <property type="entry name" value="HEAVY METAL TRANSPORTER"/>
    <property type="match status" value="1"/>
</dbReference>
<dbReference type="Pfam" id="PF00005">
    <property type="entry name" value="ABC_tran"/>
    <property type="match status" value="1"/>
</dbReference>
<dbReference type="SMART" id="SM00382">
    <property type="entry name" value="AAA"/>
    <property type="match status" value="1"/>
</dbReference>
<dbReference type="SUPFAM" id="SSF52540">
    <property type="entry name" value="P-loop containing nucleoside triphosphate hydrolases"/>
    <property type="match status" value="1"/>
</dbReference>
<dbReference type="PROSITE" id="PS00211">
    <property type="entry name" value="ABC_TRANSPORTER_1"/>
    <property type="match status" value="1"/>
</dbReference>
<dbReference type="PROSITE" id="PS50893">
    <property type="entry name" value="ABC_TRANSPORTER_2"/>
    <property type="match status" value="1"/>
</dbReference>
<dbReference type="PROSITE" id="PS51246">
    <property type="entry name" value="CBIO"/>
    <property type="match status" value="1"/>
</dbReference>
<organism>
    <name type="scientific">Streptococcus mutans serotype c (strain ATCC 700610 / UA159)</name>
    <dbReference type="NCBI Taxonomy" id="210007"/>
    <lineage>
        <taxon>Bacteria</taxon>
        <taxon>Bacillati</taxon>
        <taxon>Bacillota</taxon>
        <taxon>Bacilli</taxon>
        <taxon>Lactobacillales</taxon>
        <taxon>Streptococcaceae</taxon>
        <taxon>Streptococcus</taxon>
    </lineage>
</organism>
<accession>Q8DRR9</accession>
<reference key="1">
    <citation type="journal article" date="2002" name="Proc. Natl. Acad. Sci. U.S.A.">
        <title>Genome sequence of Streptococcus mutans UA159, a cariogenic dental pathogen.</title>
        <authorList>
            <person name="Ajdic D.J."/>
            <person name="McShan W.M."/>
            <person name="McLaughlin R.E."/>
            <person name="Savic G."/>
            <person name="Chang J."/>
            <person name="Carson M.B."/>
            <person name="Primeaux C."/>
            <person name="Tian R."/>
            <person name="Kenton S."/>
            <person name="Jia H.G."/>
            <person name="Lin S.P."/>
            <person name="Qian Y."/>
            <person name="Li S."/>
            <person name="Zhu H."/>
            <person name="Najar F.Z."/>
            <person name="Lai H."/>
            <person name="White J."/>
            <person name="Roe B.A."/>
            <person name="Ferretti J.J."/>
        </authorList>
    </citation>
    <scope>NUCLEOTIDE SEQUENCE [LARGE SCALE GENOMIC DNA]</scope>
    <source>
        <strain>ATCC 700610 / UA159</strain>
    </source>
</reference>